<accession>A0KJ94</accession>
<feature type="chain" id="PRO_1000060582" description="Integration host factor subunit beta">
    <location>
        <begin position="1"/>
        <end position="94"/>
    </location>
</feature>
<organism>
    <name type="scientific">Aeromonas hydrophila subsp. hydrophila (strain ATCC 7966 / DSM 30187 / BCRC 13018 / CCUG 14551 / JCM 1027 / KCTC 2358 / NCIMB 9240 / NCTC 8049)</name>
    <dbReference type="NCBI Taxonomy" id="380703"/>
    <lineage>
        <taxon>Bacteria</taxon>
        <taxon>Pseudomonadati</taxon>
        <taxon>Pseudomonadota</taxon>
        <taxon>Gammaproteobacteria</taxon>
        <taxon>Aeromonadales</taxon>
        <taxon>Aeromonadaceae</taxon>
        <taxon>Aeromonas</taxon>
    </lineage>
</organism>
<protein>
    <recommendedName>
        <fullName evidence="1">Integration host factor subunit beta</fullName>
        <shortName evidence="1">IHF-beta</shortName>
    </recommendedName>
</protein>
<comment type="function">
    <text evidence="1">This protein is one of the two subunits of integration host factor, a specific DNA-binding protein that functions in genetic recombination as well as in transcriptional and translational control.</text>
</comment>
<comment type="subunit">
    <text evidence="1">Heterodimer of an alpha and a beta chain.</text>
</comment>
<comment type="similarity">
    <text evidence="1">Belongs to the bacterial histone-like protein family.</text>
</comment>
<gene>
    <name evidence="1" type="primary">ihfB</name>
    <name evidence="1" type="synonym">himD</name>
    <name type="ordered locus">AHA_1810</name>
</gene>
<name>IHFB_AERHH</name>
<proteinExistence type="inferred from homology"/>
<sequence length="94" mass="10606">MTKSDLIEQLAASRMHMPAKDVEAAIKEILEQMASTLQNGDRIEIRGFGSFSLHYRAPRVGRNPKTGDKVELTGKYVPHFKPGKELRERVNIAE</sequence>
<evidence type="ECO:0000255" key="1">
    <source>
        <dbReference type="HAMAP-Rule" id="MF_00381"/>
    </source>
</evidence>
<dbReference type="EMBL" id="CP000462">
    <property type="protein sequence ID" value="ABK36617.1"/>
    <property type="molecule type" value="Genomic_DNA"/>
</dbReference>
<dbReference type="RefSeq" id="WP_011705691.1">
    <property type="nucleotide sequence ID" value="NC_008570.1"/>
</dbReference>
<dbReference type="RefSeq" id="YP_856345.1">
    <property type="nucleotide sequence ID" value="NC_008570.1"/>
</dbReference>
<dbReference type="SMR" id="A0KJ94"/>
<dbReference type="STRING" id="380703.AHA_1810"/>
<dbReference type="EnsemblBacteria" id="ABK36617">
    <property type="protein sequence ID" value="ABK36617"/>
    <property type="gene ID" value="AHA_1810"/>
</dbReference>
<dbReference type="GeneID" id="4490133"/>
<dbReference type="KEGG" id="aha:AHA_1810"/>
<dbReference type="PATRIC" id="fig|380703.7.peg.1826"/>
<dbReference type="eggNOG" id="COG0776">
    <property type="taxonomic scope" value="Bacteria"/>
</dbReference>
<dbReference type="HOGENOM" id="CLU_105066_2_0_6"/>
<dbReference type="OrthoDB" id="9804203at2"/>
<dbReference type="Proteomes" id="UP000000756">
    <property type="component" value="Chromosome"/>
</dbReference>
<dbReference type="GO" id="GO:0005694">
    <property type="term" value="C:chromosome"/>
    <property type="evidence" value="ECO:0007669"/>
    <property type="project" value="InterPro"/>
</dbReference>
<dbReference type="GO" id="GO:0005829">
    <property type="term" value="C:cytosol"/>
    <property type="evidence" value="ECO:0007669"/>
    <property type="project" value="TreeGrafter"/>
</dbReference>
<dbReference type="GO" id="GO:0003677">
    <property type="term" value="F:DNA binding"/>
    <property type="evidence" value="ECO:0007669"/>
    <property type="project" value="UniProtKB-UniRule"/>
</dbReference>
<dbReference type="GO" id="GO:0030527">
    <property type="term" value="F:structural constituent of chromatin"/>
    <property type="evidence" value="ECO:0007669"/>
    <property type="project" value="InterPro"/>
</dbReference>
<dbReference type="GO" id="GO:0006310">
    <property type="term" value="P:DNA recombination"/>
    <property type="evidence" value="ECO:0007669"/>
    <property type="project" value="UniProtKB-UniRule"/>
</dbReference>
<dbReference type="GO" id="GO:0006355">
    <property type="term" value="P:regulation of DNA-templated transcription"/>
    <property type="evidence" value="ECO:0007669"/>
    <property type="project" value="UniProtKB-UniRule"/>
</dbReference>
<dbReference type="GO" id="GO:0006417">
    <property type="term" value="P:regulation of translation"/>
    <property type="evidence" value="ECO:0007669"/>
    <property type="project" value="UniProtKB-UniRule"/>
</dbReference>
<dbReference type="CDD" id="cd13836">
    <property type="entry name" value="IHF_B"/>
    <property type="match status" value="1"/>
</dbReference>
<dbReference type="FunFam" id="4.10.520.10:FF:000003">
    <property type="entry name" value="Integration host factor subunit beta"/>
    <property type="match status" value="1"/>
</dbReference>
<dbReference type="Gene3D" id="4.10.520.10">
    <property type="entry name" value="IHF-like DNA-binding proteins"/>
    <property type="match status" value="1"/>
</dbReference>
<dbReference type="HAMAP" id="MF_00381">
    <property type="entry name" value="IHF_beta"/>
    <property type="match status" value="1"/>
</dbReference>
<dbReference type="InterPro" id="IPR000119">
    <property type="entry name" value="Hist_DNA-bd"/>
</dbReference>
<dbReference type="InterPro" id="IPR020816">
    <property type="entry name" value="Histone-like_DNA-bd_CS"/>
</dbReference>
<dbReference type="InterPro" id="IPR010992">
    <property type="entry name" value="IHF-like_DNA-bd_dom_sf"/>
</dbReference>
<dbReference type="InterPro" id="IPR005685">
    <property type="entry name" value="IHF_beta"/>
</dbReference>
<dbReference type="NCBIfam" id="TIGR00988">
    <property type="entry name" value="hip"/>
    <property type="match status" value="1"/>
</dbReference>
<dbReference type="NCBIfam" id="NF001222">
    <property type="entry name" value="PRK00199.1"/>
    <property type="match status" value="1"/>
</dbReference>
<dbReference type="PANTHER" id="PTHR33175">
    <property type="entry name" value="DNA-BINDING PROTEIN HU"/>
    <property type="match status" value="1"/>
</dbReference>
<dbReference type="PANTHER" id="PTHR33175:SF5">
    <property type="entry name" value="INTEGRATION HOST FACTOR SUBUNIT BETA"/>
    <property type="match status" value="1"/>
</dbReference>
<dbReference type="Pfam" id="PF00216">
    <property type="entry name" value="Bac_DNA_binding"/>
    <property type="match status" value="1"/>
</dbReference>
<dbReference type="PRINTS" id="PR01727">
    <property type="entry name" value="DNABINDINGHU"/>
</dbReference>
<dbReference type="SMART" id="SM00411">
    <property type="entry name" value="BHL"/>
    <property type="match status" value="1"/>
</dbReference>
<dbReference type="SUPFAM" id="SSF47729">
    <property type="entry name" value="IHF-like DNA-binding proteins"/>
    <property type="match status" value="1"/>
</dbReference>
<dbReference type="PROSITE" id="PS00045">
    <property type="entry name" value="HISTONE_LIKE"/>
    <property type="match status" value="1"/>
</dbReference>
<keyword id="KW-0233">DNA recombination</keyword>
<keyword id="KW-0238">DNA-binding</keyword>
<keyword id="KW-1185">Reference proteome</keyword>
<keyword id="KW-0804">Transcription</keyword>
<keyword id="KW-0805">Transcription regulation</keyword>
<keyword id="KW-0810">Translation regulation</keyword>
<reference key="1">
    <citation type="journal article" date="2006" name="J. Bacteriol.">
        <title>Genome sequence of Aeromonas hydrophila ATCC 7966T: jack of all trades.</title>
        <authorList>
            <person name="Seshadri R."/>
            <person name="Joseph S.W."/>
            <person name="Chopra A.K."/>
            <person name="Sha J."/>
            <person name="Shaw J."/>
            <person name="Graf J."/>
            <person name="Haft D.H."/>
            <person name="Wu M."/>
            <person name="Ren Q."/>
            <person name="Rosovitz M.J."/>
            <person name="Madupu R."/>
            <person name="Tallon L."/>
            <person name="Kim M."/>
            <person name="Jin S."/>
            <person name="Vuong H."/>
            <person name="Stine O.C."/>
            <person name="Ali A."/>
            <person name="Horneman A.J."/>
            <person name="Heidelberg J.F."/>
        </authorList>
    </citation>
    <scope>NUCLEOTIDE SEQUENCE [LARGE SCALE GENOMIC DNA]</scope>
    <source>
        <strain>ATCC 7966 / DSM 30187 / BCRC 13018 / CCUG 14551 / JCM 1027 / KCTC 2358 / NCIMB 9240 / NCTC 8049</strain>
    </source>
</reference>